<organism>
    <name type="scientific">Botryotinia fuckeliana (strain B05.10)</name>
    <name type="common">Noble rot fungus</name>
    <name type="synonym">Botrytis cinerea</name>
    <dbReference type="NCBI Taxonomy" id="332648"/>
    <lineage>
        <taxon>Eukaryota</taxon>
        <taxon>Fungi</taxon>
        <taxon>Dikarya</taxon>
        <taxon>Ascomycota</taxon>
        <taxon>Pezizomycotina</taxon>
        <taxon>Leotiomycetes</taxon>
        <taxon>Helotiales</taxon>
        <taxon>Sclerotiniaceae</taxon>
        <taxon>Botrytis</taxon>
    </lineage>
</organism>
<evidence type="ECO:0000255" key="1">
    <source>
        <dbReference type="HAMAP-Rule" id="MF_03105"/>
    </source>
</evidence>
<evidence type="ECO:0000256" key="2">
    <source>
        <dbReference type="SAM" id="MobiDB-lite"/>
    </source>
</evidence>
<keyword id="KW-0445">Lipid transport</keyword>
<keyword id="KW-0446">Lipid-binding</keyword>
<keyword id="KW-0472">Membrane</keyword>
<keyword id="KW-0496">Mitochondrion</keyword>
<keyword id="KW-1000">Mitochondrion outer membrane</keyword>
<keyword id="KW-1185">Reference proteome</keyword>
<keyword id="KW-0812">Transmembrane</keyword>
<keyword id="KW-1134">Transmembrane beta strand</keyword>
<keyword id="KW-0813">Transport</keyword>
<accession>A6S9E2</accession>
<accession>A0A384JND4</accession>
<dbReference type="EMBL" id="CP009811">
    <property type="protein sequence ID" value="ATZ51991.1"/>
    <property type="molecule type" value="Genomic_DNA"/>
</dbReference>
<dbReference type="RefSeq" id="XP_001552158.1">
    <property type="nucleotide sequence ID" value="XM_001552108.1"/>
</dbReference>
<dbReference type="SMR" id="A6S9E2"/>
<dbReference type="EnsemblFungi" id="Bcin07g05250.1">
    <property type="protein sequence ID" value="Bcin07p05250.1"/>
    <property type="gene ID" value="Bcin07g05250"/>
</dbReference>
<dbReference type="GeneID" id="5432678"/>
<dbReference type="KEGG" id="bfu:BCIN_07g05250"/>
<dbReference type="VEuPathDB" id="FungiDB:Bcin07g05250"/>
<dbReference type="OMA" id="VFRAWSG"/>
<dbReference type="OrthoDB" id="17927at2759"/>
<dbReference type="Proteomes" id="UP000001798">
    <property type="component" value="Chromosome bcin07"/>
</dbReference>
<dbReference type="GO" id="GO:0032865">
    <property type="term" value="C:ERMES complex"/>
    <property type="evidence" value="ECO:0007669"/>
    <property type="project" value="UniProtKB-UniRule"/>
</dbReference>
<dbReference type="GO" id="GO:0008289">
    <property type="term" value="F:lipid binding"/>
    <property type="evidence" value="ECO:0007669"/>
    <property type="project" value="UniProtKB-KW"/>
</dbReference>
<dbReference type="GO" id="GO:0000002">
    <property type="term" value="P:mitochondrial genome maintenance"/>
    <property type="evidence" value="ECO:0007669"/>
    <property type="project" value="UniProtKB-UniRule"/>
</dbReference>
<dbReference type="GO" id="GO:1990456">
    <property type="term" value="P:mitochondrion-endoplasmic reticulum membrane tethering"/>
    <property type="evidence" value="ECO:0007669"/>
    <property type="project" value="TreeGrafter"/>
</dbReference>
<dbReference type="GO" id="GO:0015914">
    <property type="term" value="P:phospholipid transport"/>
    <property type="evidence" value="ECO:0007669"/>
    <property type="project" value="TreeGrafter"/>
</dbReference>
<dbReference type="CDD" id="cd21673">
    <property type="entry name" value="SMP_Mdm34"/>
    <property type="match status" value="1"/>
</dbReference>
<dbReference type="HAMAP" id="MF_03105">
    <property type="entry name" value="Mdm34"/>
    <property type="match status" value="1"/>
</dbReference>
<dbReference type="InterPro" id="IPR027536">
    <property type="entry name" value="Mdm34"/>
</dbReference>
<dbReference type="InterPro" id="IPR031468">
    <property type="entry name" value="SMP_LBD"/>
</dbReference>
<dbReference type="PANTHER" id="PTHR28185">
    <property type="entry name" value="MITOCHONDRIAL DISTRIBUTION AND MORPHOLOGY PROTEIN 34"/>
    <property type="match status" value="1"/>
</dbReference>
<dbReference type="PANTHER" id="PTHR28185:SF1">
    <property type="entry name" value="MITOCHONDRIAL DISTRIBUTION AND MORPHOLOGY PROTEIN 34"/>
    <property type="match status" value="1"/>
</dbReference>
<dbReference type="PROSITE" id="PS51847">
    <property type="entry name" value="SMP"/>
    <property type="match status" value="1"/>
</dbReference>
<proteinExistence type="inferred from homology"/>
<name>MDM34_BOTFB</name>
<gene>
    <name evidence="1" type="primary">MDM34</name>
    <name type="ORF">BC1G_09322</name>
    <name type="ORF">BCIN_07g05250</name>
</gene>
<sequence>MAFNFNWSPLTADAEFYQRAQEMLTAALNKSPKPPIIKDDILVNELNLGSVPPDLEILEIGDLAEDRFRGIFKMCYSGDAFLTLKTRVQANPLNNHLFSKPSFTSPQPLAADAGLTIPLQITLSDIKLSAFIIVVFSKSKGLTLVFRNDPLESLKVSSTFDSIPFIKDYLQKEIEQQLRTLMMDELPAIIHRLSLRLWCPEYRAKEDQEMAEAAKKTKDEVAVDPFASPPQDAVDARGNVLDATEISNLSLDGGSEIHSLFSQKNLLRLAALTNSHRTLSLFTPSIRDAVFRAWAPSERGDSAGTTTPATPSLQRPQSSLGSQSTTYTFSNRSSDDGHGGIPSRPSLVNMNSATTGLSLGANRGSRSHPTRKKKNRVVNLRKPKTTESSESGESETASTTAVSEPTVPSRIPEEPEDLPVTPPSGKVRFNSIDLGDSPKKLPPSRSMTPEQVKMDQIPSLTVQPSTPINTQEQKRPAYNQSASTSYTPEKSAITPPHTPFSYPHGLHFSTTESPSGILEQAWIMKMASELARRQHDDKTARQGFWSTSSNGDDAPPAYEPKAL</sequence>
<comment type="function">
    <text evidence="1">Component of the ERMES/MDM complex, which serves as a molecular tether to connect the endoplasmic reticulum (ER) and mitochondria. Components of this complex are involved in the control of mitochondrial shape and protein biogenesis, and function in nonvesicular lipid trafficking between the ER and mitochondria. MDM34 is required for the interaction of the ER-resident membrane protein MMM1 and the outer mitochondrial membrane-resident beta-barrel protein MDM10.</text>
</comment>
<comment type="subunit">
    <text evidence="1">Component of the ER-mitochondria encounter structure (ERMES) or MDM complex, composed of MMM1, MDM10, MDM12 and MDM34.</text>
</comment>
<comment type="subcellular location">
    <subcellularLocation>
        <location evidence="1">Mitochondrion outer membrane</location>
        <topology evidence="1">Multi-pass membrane protein</topology>
    </subcellularLocation>
    <text evidence="1">The ERMES/MDM complex localizes to a few discrete foci (around 10 per single cell), that represent mitochondria-endoplasmic reticulum junctions. These foci are often found next to mtDNA nucleoids.</text>
</comment>
<comment type="domain">
    <text evidence="1">Lacks alpha-helical transmembrane segments, suggesting that it resides in the membrane via beta-sheet conformations similar to those predicted for other outer membrane proteins and porin.</text>
</comment>
<comment type="domain">
    <text evidence="1">The SMP-LTD domain is a barrel-like domain that can bind various types of glycerophospholipids in its interior and mediate their transfer between two adjacent bilayers.</text>
</comment>
<comment type="similarity">
    <text evidence="1">Belongs to the MDM34 family.</text>
</comment>
<feature type="chain" id="PRO_0000384331" description="Mitochondrial distribution and morphology protein 34">
    <location>
        <begin position="1"/>
        <end position="563"/>
    </location>
</feature>
<feature type="domain" description="SMP-LTD" evidence="1">
    <location>
        <begin position="1"/>
        <end position="195"/>
    </location>
</feature>
<feature type="region of interest" description="Disordered" evidence="2">
    <location>
        <begin position="298"/>
        <end position="499"/>
    </location>
</feature>
<feature type="region of interest" description="Disordered" evidence="2">
    <location>
        <begin position="531"/>
        <end position="563"/>
    </location>
</feature>
<feature type="compositionally biased region" description="Polar residues" evidence="2">
    <location>
        <begin position="303"/>
        <end position="332"/>
    </location>
</feature>
<feature type="compositionally biased region" description="Polar residues" evidence="2">
    <location>
        <begin position="346"/>
        <end position="357"/>
    </location>
</feature>
<feature type="compositionally biased region" description="Basic residues" evidence="2">
    <location>
        <begin position="365"/>
        <end position="383"/>
    </location>
</feature>
<feature type="compositionally biased region" description="Low complexity" evidence="2">
    <location>
        <begin position="386"/>
        <end position="407"/>
    </location>
</feature>
<feature type="compositionally biased region" description="Polar residues" evidence="2">
    <location>
        <begin position="458"/>
        <end position="471"/>
    </location>
</feature>
<feature type="compositionally biased region" description="Polar residues" evidence="2">
    <location>
        <begin position="478"/>
        <end position="488"/>
    </location>
</feature>
<feature type="compositionally biased region" description="Basic and acidic residues" evidence="2">
    <location>
        <begin position="531"/>
        <end position="540"/>
    </location>
</feature>
<reference key="1">
    <citation type="journal article" date="2011" name="PLoS Genet.">
        <title>Genomic analysis of the necrotrophic fungal pathogens Sclerotinia sclerotiorum and Botrytis cinerea.</title>
        <authorList>
            <person name="Amselem J."/>
            <person name="Cuomo C.A."/>
            <person name="van Kan J.A.L."/>
            <person name="Viaud M."/>
            <person name="Benito E.P."/>
            <person name="Couloux A."/>
            <person name="Coutinho P.M."/>
            <person name="de Vries R.P."/>
            <person name="Dyer P.S."/>
            <person name="Fillinger S."/>
            <person name="Fournier E."/>
            <person name="Gout L."/>
            <person name="Hahn M."/>
            <person name="Kohn L."/>
            <person name="Lapalu N."/>
            <person name="Plummer K.M."/>
            <person name="Pradier J.-M."/>
            <person name="Quevillon E."/>
            <person name="Sharon A."/>
            <person name="Simon A."/>
            <person name="ten Have A."/>
            <person name="Tudzynski B."/>
            <person name="Tudzynski P."/>
            <person name="Wincker P."/>
            <person name="Andrew M."/>
            <person name="Anthouard V."/>
            <person name="Beever R.E."/>
            <person name="Beffa R."/>
            <person name="Benoit I."/>
            <person name="Bouzid O."/>
            <person name="Brault B."/>
            <person name="Chen Z."/>
            <person name="Choquer M."/>
            <person name="Collemare J."/>
            <person name="Cotton P."/>
            <person name="Danchin E.G."/>
            <person name="Da Silva C."/>
            <person name="Gautier A."/>
            <person name="Giraud C."/>
            <person name="Giraud T."/>
            <person name="Gonzalez C."/>
            <person name="Grossetete S."/>
            <person name="Gueldener U."/>
            <person name="Henrissat B."/>
            <person name="Howlett B.J."/>
            <person name="Kodira C."/>
            <person name="Kretschmer M."/>
            <person name="Lappartient A."/>
            <person name="Leroch M."/>
            <person name="Levis C."/>
            <person name="Mauceli E."/>
            <person name="Neuveglise C."/>
            <person name="Oeser B."/>
            <person name="Pearson M."/>
            <person name="Poulain J."/>
            <person name="Poussereau N."/>
            <person name="Quesneville H."/>
            <person name="Rascle C."/>
            <person name="Schumacher J."/>
            <person name="Segurens B."/>
            <person name="Sexton A."/>
            <person name="Silva E."/>
            <person name="Sirven C."/>
            <person name="Soanes D.M."/>
            <person name="Talbot N.J."/>
            <person name="Templeton M."/>
            <person name="Yandava C."/>
            <person name="Yarden O."/>
            <person name="Zeng Q."/>
            <person name="Rollins J.A."/>
            <person name="Lebrun M.-H."/>
            <person name="Dickman M."/>
        </authorList>
    </citation>
    <scope>NUCLEOTIDE SEQUENCE [LARGE SCALE GENOMIC DNA]</scope>
    <source>
        <strain>B05.10</strain>
    </source>
</reference>
<reference key="2">
    <citation type="journal article" date="2012" name="Eukaryot. Cell">
        <title>Genome update of Botrytis cinerea strains B05.10 and T4.</title>
        <authorList>
            <person name="Staats M."/>
            <person name="van Kan J.A.L."/>
        </authorList>
    </citation>
    <scope>NUCLEOTIDE SEQUENCE [LARGE SCALE GENOMIC DNA]</scope>
    <scope>GENOME REANNOTATION</scope>
    <source>
        <strain>B05.10</strain>
    </source>
</reference>
<reference key="3">
    <citation type="journal article" date="2017" name="Mol. Plant Pathol.">
        <title>A gapless genome sequence of the fungus Botrytis cinerea.</title>
        <authorList>
            <person name="van Kan J.A.L."/>
            <person name="Stassen J.H.M."/>
            <person name="Mosbach A."/>
            <person name="van der Lee T.A.J."/>
            <person name="Faino L."/>
            <person name="Farmer A.D."/>
            <person name="Papasotiriou D.G."/>
            <person name="Zhou S."/>
            <person name="Seidl M.F."/>
            <person name="Cottam E."/>
            <person name="Edel D."/>
            <person name="Hahn M."/>
            <person name="Schwartz D.C."/>
            <person name="Dietrich R.A."/>
            <person name="Widdison S."/>
            <person name="Scalliet G."/>
        </authorList>
    </citation>
    <scope>NUCLEOTIDE SEQUENCE [LARGE SCALE GENOMIC DNA]</scope>
    <scope>GENOME REANNOTATION</scope>
    <source>
        <strain>B05.10</strain>
    </source>
</reference>
<protein>
    <recommendedName>
        <fullName evidence="1">Mitochondrial distribution and morphology protein 34</fullName>
    </recommendedName>
</protein>